<accession>P21233</accession>
<dbReference type="EMBL" id="X52632">
    <property type="protein sequence ID" value="CAA36857.1"/>
    <property type="molecule type" value="Genomic_DNA"/>
</dbReference>
<dbReference type="PIR" id="S12726">
    <property type="entry name" value="S12726"/>
</dbReference>
<dbReference type="RefSeq" id="WP_001814874.1">
    <property type="nucleotide sequence ID" value="NZ_WSZH01000012.1"/>
</dbReference>
<dbReference type="GO" id="GO:0046677">
    <property type="term" value="P:response to antibiotic"/>
    <property type="evidence" value="ECO:0007669"/>
    <property type="project" value="UniProtKB-KW"/>
</dbReference>
<dbReference type="InterPro" id="IPR009391">
    <property type="entry name" value="ErmCL"/>
</dbReference>
<dbReference type="Pfam" id="PF06308">
    <property type="entry name" value="ErmC"/>
    <property type="match status" value="1"/>
</dbReference>
<keyword id="KW-0046">Antibiotic resistance</keyword>
<keyword id="KW-0428">Leader peptide</keyword>
<keyword id="KW-0814">Transposable element</keyword>
<organism>
    <name type="scientific">Streptococcus pneumoniae</name>
    <dbReference type="NCBI Taxonomy" id="1313"/>
    <lineage>
        <taxon>Bacteria</taxon>
        <taxon>Bacillati</taxon>
        <taxon>Bacillota</taxon>
        <taxon>Bacilli</taxon>
        <taxon>Lactobacillales</taxon>
        <taxon>Streptococcaceae</taxon>
        <taxon>Streptococcus</taxon>
    </lineage>
</organism>
<sequence length="27" mass="3162">MLVFQMRNVDKTSTVLKQTKNSDYADK</sequence>
<reference key="1">
    <citation type="journal article" date="1990" name="Nucleic Acids Res.">
        <title>Nucleotide sequence of the erythromycin resistance gene of the conjugative transposon Tn1545.</title>
        <authorList>
            <person name="Trieu-Cuot P."/>
            <person name="Poyart-Salmeron C."/>
            <person name="Carlier C."/>
            <person name="Courvalin P."/>
        </authorList>
    </citation>
    <scope>NUCLEOTIDE SEQUENCE [GENOMIC DNA]</scope>
    <source>
        <transposon>Tn1545</transposon>
    </source>
</reference>
<proteinExistence type="predicted"/>
<comment type="function">
    <text>This peptide is involved in the control mechanism of the synthesis of the erythromycin resistance protein.</text>
</comment>
<gene>
    <name type="primary">ermC</name>
</gene>
<feature type="peptide" id="PRO_0000044006" description="23S rRNA methylase leader peptide">
    <location>
        <begin position="1"/>
        <end position="27"/>
    </location>
</feature>
<name>LPRM_STREE</name>
<protein>
    <recommendedName>
        <fullName>23S rRNA methylase leader peptide</fullName>
    </recommendedName>
    <alternativeName>
        <fullName>Erythromycin resistance leader peptide</fullName>
    </alternativeName>
</protein>